<feature type="chain" id="PRO_0000081321" description="Pathogenicity locus probable regulatory protein HrpR">
    <location>
        <begin position="1"/>
        <end position="314"/>
    </location>
</feature>
<feature type="domain" description="Sigma-54 factor interaction" evidence="2">
    <location>
        <begin position="11"/>
        <end position="239"/>
    </location>
</feature>
<feature type="DNA-binding region" description="H-T-H motif" evidence="1">
    <location>
        <begin position="281"/>
        <end position="300"/>
    </location>
</feature>
<feature type="binding site" evidence="2">
    <location>
        <begin position="39"/>
        <end position="46"/>
    </location>
    <ligand>
        <name>ATP</name>
        <dbReference type="ChEBI" id="CHEBI:30616"/>
    </ligand>
</feature>
<feature type="binding site" evidence="2">
    <location>
        <begin position="101"/>
        <end position="110"/>
    </location>
    <ligand>
        <name>ATP</name>
        <dbReference type="ChEBI" id="CHEBI:30616"/>
    </ligand>
</feature>
<name>HRPR_PSESY</name>
<organism>
    <name type="scientific">Pseudomonas syringae pv. syringae</name>
    <dbReference type="NCBI Taxonomy" id="321"/>
    <lineage>
        <taxon>Bacteria</taxon>
        <taxon>Pseudomonadati</taxon>
        <taxon>Pseudomonadota</taxon>
        <taxon>Gammaproteobacteria</taxon>
        <taxon>Pseudomonadales</taxon>
        <taxon>Pseudomonadaceae</taxon>
        <taxon>Pseudomonas</taxon>
        <taxon>Pseudomonas syringae</taxon>
    </lineage>
</organism>
<keyword id="KW-0010">Activator</keyword>
<keyword id="KW-0067">ATP-binding</keyword>
<keyword id="KW-0238">DNA-binding</keyword>
<keyword id="KW-0928">Hypersensitive response elicitation</keyword>
<keyword id="KW-0547">Nucleotide-binding</keyword>
<keyword id="KW-0804">Transcription</keyword>
<keyword id="KW-0805">Transcription regulation</keyword>
<keyword id="KW-0902">Two-component regulatory system</keyword>
<sequence>MSTDIDNDVRTRWNVTALSAGHQIAMHSALLDMDLLLCGETGTGKDTLASRIHELSSRTGPFVGMNCAAIPESLAESQLFGVVNGAFTGVCRAREGYIEPSNGGTLYLDEIDTMPLSLQAKLLRVLESRGVERLGSTDFIPLDLQVIASASAPLDELVEQGLFRRDLFFRLNVLTLQLPALRKRREQILPLFDQFTQDIAAECGRSAPTLDNGRVQILLSHDWPGNVRELKSAANAICPRIAVAGRRAVEARDPVTGLRMQMRVIEKMLIQDALKRHRHNFDAVLEELELPRRTLYHRMKELGVASHIDLAAES</sequence>
<proteinExistence type="predicted"/>
<evidence type="ECO:0000255" key="1"/>
<evidence type="ECO:0000255" key="2">
    <source>
        <dbReference type="PROSITE-ProRule" id="PRU00193"/>
    </source>
</evidence>
<reference key="1">
    <citation type="journal article" date="1994" name="J. Bacteriol.">
        <title>Identification of a putative alternate sigma factor and characterization of a multicomponent regulatory cascade controlling the expression of Pseudomonas syringae pv. syringae Pss61 hrp and hrmA genes.</title>
        <authorList>
            <person name="Xiao Y."/>
            <person name="Heu S."/>
            <person name="Yi J."/>
            <person name="Lu Y."/>
            <person name="Hutcheson S.W."/>
        </authorList>
    </citation>
    <scope>NUCLEOTIDE SEQUENCE [GENOMIC DNA]</scope>
    <source>
        <strain>Pss61</strain>
    </source>
</reference>
<accession>P37930</accession>
<gene>
    <name type="primary">hrpR</name>
</gene>
<protein>
    <recommendedName>
        <fullName>Pathogenicity locus probable regulatory protein HrpR</fullName>
    </recommendedName>
</protein>
<dbReference type="EMBL" id="U03853">
    <property type="protein sequence ID" value="AAA17651.1"/>
    <property type="molecule type" value="Unassigned_DNA"/>
</dbReference>
<dbReference type="PIR" id="A49889">
    <property type="entry name" value="A49889"/>
</dbReference>
<dbReference type="SMR" id="P37930"/>
<dbReference type="GO" id="GO:0005524">
    <property type="term" value="F:ATP binding"/>
    <property type="evidence" value="ECO:0007669"/>
    <property type="project" value="UniProtKB-KW"/>
</dbReference>
<dbReference type="GO" id="GO:0016887">
    <property type="term" value="F:ATP hydrolysis activity"/>
    <property type="evidence" value="ECO:0007669"/>
    <property type="project" value="InterPro"/>
</dbReference>
<dbReference type="GO" id="GO:0043565">
    <property type="term" value="F:sequence-specific DNA binding"/>
    <property type="evidence" value="ECO:0007669"/>
    <property type="project" value="InterPro"/>
</dbReference>
<dbReference type="GO" id="GO:0000160">
    <property type="term" value="P:phosphorelay signal transduction system"/>
    <property type="evidence" value="ECO:0007669"/>
    <property type="project" value="UniProtKB-KW"/>
</dbReference>
<dbReference type="GO" id="GO:0006355">
    <property type="term" value="P:regulation of DNA-templated transcription"/>
    <property type="evidence" value="ECO:0007669"/>
    <property type="project" value="InterPro"/>
</dbReference>
<dbReference type="GO" id="GO:0052040">
    <property type="term" value="P:symbiont-mediated perturbation of host programmed cell death"/>
    <property type="evidence" value="ECO:0007669"/>
    <property type="project" value="UniProtKB-KW"/>
</dbReference>
<dbReference type="CDD" id="cd00009">
    <property type="entry name" value="AAA"/>
    <property type="match status" value="1"/>
</dbReference>
<dbReference type="FunFam" id="3.40.50.300:FF:000006">
    <property type="entry name" value="DNA-binding transcriptional regulator NtrC"/>
    <property type="match status" value="1"/>
</dbReference>
<dbReference type="Gene3D" id="1.10.8.60">
    <property type="match status" value="1"/>
</dbReference>
<dbReference type="Gene3D" id="1.10.10.60">
    <property type="entry name" value="Homeodomain-like"/>
    <property type="match status" value="1"/>
</dbReference>
<dbReference type="Gene3D" id="3.40.50.300">
    <property type="entry name" value="P-loop containing nucleotide triphosphate hydrolases"/>
    <property type="match status" value="1"/>
</dbReference>
<dbReference type="InterPro" id="IPR003593">
    <property type="entry name" value="AAA+_ATPase"/>
</dbReference>
<dbReference type="InterPro" id="IPR009057">
    <property type="entry name" value="Homeodomain-like_sf"/>
</dbReference>
<dbReference type="InterPro" id="IPR002197">
    <property type="entry name" value="HTH_Fis"/>
</dbReference>
<dbReference type="InterPro" id="IPR027417">
    <property type="entry name" value="P-loop_NTPase"/>
</dbReference>
<dbReference type="InterPro" id="IPR002078">
    <property type="entry name" value="Sigma_54_int"/>
</dbReference>
<dbReference type="InterPro" id="IPR025662">
    <property type="entry name" value="Sigma_54_int_dom_ATP-bd_1"/>
</dbReference>
<dbReference type="InterPro" id="IPR025943">
    <property type="entry name" value="Sigma_54_int_dom_ATP-bd_2"/>
</dbReference>
<dbReference type="PANTHER" id="PTHR32071:SF57">
    <property type="entry name" value="C4-DICARBOXYLATE TRANSPORT TRANSCRIPTIONAL REGULATORY PROTEIN DCTD"/>
    <property type="match status" value="1"/>
</dbReference>
<dbReference type="PANTHER" id="PTHR32071">
    <property type="entry name" value="TRANSCRIPTIONAL REGULATORY PROTEIN"/>
    <property type="match status" value="1"/>
</dbReference>
<dbReference type="Pfam" id="PF02954">
    <property type="entry name" value="HTH_8"/>
    <property type="match status" value="1"/>
</dbReference>
<dbReference type="Pfam" id="PF00158">
    <property type="entry name" value="Sigma54_activat"/>
    <property type="match status" value="1"/>
</dbReference>
<dbReference type="SMART" id="SM00382">
    <property type="entry name" value="AAA"/>
    <property type="match status" value="1"/>
</dbReference>
<dbReference type="SUPFAM" id="SSF46689">
    <property type="entry name" value="Homeodomain-like"/>
    <property type="match status" value="1"/>
</dbReference>
<dbReference type="SUPFAM" id="SSF52540">
    <property type="entry name" value="P-loop containing nucleoside triphosphate hydrolases"/>
    <property type="match status" value="1"/>
</dbReference>
<dbReference type="PROSITE" id="PS00675">
    <property type="entry name" value="SIGMA54_INTERACT_1"/>
    <property type="match status" value="1"/>
</dbReference>
<dbReference type="PROSITE" id="PS00676">
    <property type="entry name" value="SIGMA54_INTERACT_2"/>
    <property type="match status" value="1"/>
</dbReference>
<dbReference type="PROSITE" id="PS50045">
    <property type="entry name" value="SIGMA54_INTERACT_4"/>
    <property type="match status" value="1"/>
</dbReference>
<comment type="function">
    <text>Member of the two-component regulatory system HrpR/HrpS that regulates the activation of the sigma factor hrpL which itself induces the expression of hprD as well as other hrp loci which are involved in plant pathogenicity, hrmA and avr genes. Probably interacts with sigma-54.</text>
</comment>